<name>RL31_CHLCH</name>
<feature type="chain" id="PRO_0000259173" description="Large ribosomal subunit protein bL31">
    <location>
        <begin position="1"/>
        <end position="70"/>
    </location>
</feature>
<proteinExistence type="inferred from homology"/>
<sequence length="70" mass="7920">MKQDIHPKYNEVTVVCANCGNSFVTRSTRPSIKVDICNNCHPFYTGKQSIVDTAGRVERFNKRFAKKAQA</sequence>
<organism>
    <name type="scientific">Chlorobium chlorochromatii (strain CaD3)</name>
    <dbReference type="NCBI Taxonomy" id="340177"/>
    <lineage>
        <taxon>Bacteria</taxon>
        <taxon>Pseudomonadati</taxon>
        <taxon>Chlorobiota</taxon>
        <taxon>Chlorobiia</taxon>
        <taxon>Chlorobiales</taxon>
        <taxon>Chlorobiaceae</taxon>
        <taxon>Chlorobium/Pelodictyon group</taxon>
        <taxon>Chlorobium</taxon>
    </lineage>
</organism>
<protein>
    <recommendedName>
        <fullName evidence="1">Large ribosomal subunit protein bL31</fullName>
    </recommendedName>
    <alternativeName>
        <fullName evidence="2">50S ribosomal protein L31</fullName>
    </alternativeName>
</protein>
<gene>
    <name evidence="1" type="primary">rpmE</name>
    <name type="ordered locus">Cag_0327</name>
</gene>
<evidence type="ECO:0000255" key="1">
    <source>
        <dbReference type="HAMAP-Rule" id="MF_00501"/>
    </source>
</evidence>
<evidence type="ECO:0000305" key="2"/>
<dbReference type="EMBL" id="CP000108">
    <property type="protein sequence ID" value="ABB27600.1"/>
    <property type="molecule type" value="Genomic_DNA"/>
</dbReference>
<dbReference type="SMR" id="Q3ATS5"/>
<dbReference type="STRING" id="340177.Cag_0327"/>
<dbReference type="KEGG" id="cch:Cag_0327"/>
<dbReference type="eggNOG" id="COG0254">
    <property type="taxonomic scope" value="Bacteria"/>
</dbReference>
<dbReference type="HOGENOM" id="CLU_114306_4_3_10"/>
<dbReference type="OrthoDB" id="9803251at2"/>
<dbReference type="GO" id="GO:1990904">
    <property type="term" value="C:ribonucleoprotein complex"/>
    <property type="evidence" value="ECO:0007669"/>
    <property type="project" value="UniProtKB-KW"/>
</dbReference>
<dbReference type="GO" id="GO:0005840">
    <property type="term" value="C:ribosome"/>
    <property type="evidence" value="ECO:0007669"/>
    <property type="project" value="UniProtKB-KW"/>
</dbReference>
<dbReference type="GO" id="GO:0019843">
    <property type="term" value="F:rRNA binding"/>
    <property type="evidence" value="ECO:0007669"/>
    <property type="project" value="UniProtKB-KW"/>
</dbReference>
<dbReference type="GO" id="GO:0003735">
    <property type="term" value="F:structural constituent of ribosome"/>
    <property type="evidence" value="ECO:0007669"/>
    <property type="project" value="InterPro"/>
</dbReference>
<dbReference type="GO" id="GO:0006412">
    <property type="term" value="P:translation"/>
    <property type="evidence" value="ECO:0007669"/>
    <property type="project" value="UniProtKB-UniRule"/>
</dbReference>
<dbReference type="Gene3D" id="4.10.830.30">
    <property type="entry name" value="Ribosomal protein L31"/>
    <property type="match status" value="1"/>
</dbReference>
<dbReference type="HAMAP" id="MF_00501">
    <property type="entry name" value="Ribosomal_bL31_1"/>
    <property type="match status" value="1"/>
</dbReference>
<dbReference type="InterPro" id="IPR034704">
    <property type="entry name" value="Ribosomal_bL28/bL31-like_sf"/>
</dbReference>
<dbReference type="InterPro" id="IPR002150">
    <property type="entry name" value="Ribosomal_bL31"/>
</dbReference>
<dbReference type="InterPro" id="IPR027491">
    <property type="entry name" value="Ribosomal_bL31_A"/>
</dbReference>
<dbReference type="InterPro" id="IPR042105">
    <property type="entry name" value="Ribosomal_bL31_sf"/>
</dbReference>
<dbReference type="NCBIfam" id="TIGR00105">
    <property type="entry name" value="L31"/>
    <property type="match status" value="1"/>
</dbReference>
<dbReference type="NCBIfam" id="NF000612">
    <property type="entry name" value="PRK00019.1"/>
    <property type="match status" value="1"/>
</dbReference>
<dbReference type="NCBIfam" id="NF001809">
    <property type="entry name" value="PRK00528.1"/>
    <property type="match status" value="1"/>
</dbReference>
<dbReference type="PANTHER" id="PTHR33280">
    <property type="entry name" value="50S RIBOSOMAL PROTEIN L31, CHLOROPLASTIC"/>
    <property type="match status" value="1"/>
</dbReference>
<dbReference type="PANTHER" id="PTHR33280:SF1">
    <property type="entry name" value="LARGE RIBOSOMAL SUBUNIT PROTEIN BL31C"/>
    <property type="match status" value="1"/>
</dbReference>
<dbReference type="Pfam" id="PF01197">
    <property type="entry name" value="Ribosomal_L31"/>
    <property type="match status" value="1"/>
</dbReference>
<dbReference type="PRINTS" id="PR01249">
    <property type="entry name" value="RIBOSOMALL31"/>
</dbReference>
<dbReference type="SUPFAM" id="SSF143800">
    <property type="entry name" value="L28p-like"/>
    <property type="match status" value="1"/>
</dbReference>
<dbReference type="PROSITE" id="PS01143">
    <property type="entry name" value="RIBOSOMAL_L31"/>
    <property type="match status" value="1"/>
</dbReference>
<comment type="function">
    <text evidence="1">Binds the 23S rRNA.</text>
</comment>
<comment type="subunit">
    <text evidence="1">Part of the 50S ribosomal subunit.</text>
</comment>
<comment type="similarity">
    <text evidence="1">Belongs to the bacterial ribosomal protein bL31 family. Type A subfamily.</text>
</comment>
<reference key="1">
    <citation type="submission" date="2005-08" db="EMBL/GenBank/DDBJ databases">
        <title>Complete sequence of Chlorobium chlorochromatii CaD3.</title>
        <authorList>
            <consortium name="US DOE Joint Genome Institute"/>
            <person name="Copeland A."/>
            <person name="Lucas S."/>
            <person name="Lapidus A."/>
            <person name="Barry K."/>
            <person name="Detter J.C."/>
            <person name="Glavina T."/>
            <person name="Hammon N."/>
            <person name="Israni S."/>
            <person name="Pitluck S."/>
            <person name="Bryant D."/>
            <person name="Schmutz J."/>
            <person name="Larimer F."/>
            <person name="Land M."/>
            <person name="Kyrpides N."/>
            <person name="Ivanova N."/>
            <person name="Richardson P."/>
        </authorList>
    </citation>
    <scope>NUCLEOTIDE SEQUENCE [LARGE SCALE GENOMIC DNA]</scope>
    <source>
        <strain>CaD3</strain>
    </source>
</reference>
<accession>Q3ATS5</accession>
<keyword id="KW-0687">Ribonucleoprotein</keyword>
<keyword id="KW-0689">Ribosomal protein</keyword>
<keyword id="KW-0694">RNA-binding</keyword>
<keyword id="KW-0699">rRNA-binding</keyword>